<accession>Q2YKZ7</accession>
<protein>
    <recommendedName>
        <fullName>Putative ATP-binding protein BAB2_0493</fullName>
        <ecNumber>7.-.-.-</ecNumber>
    </recommendedName>
</protein>
<dbReference type="EC" id="7.-.-.-"/>
<dbReference type="EMBL" id="AM040265">
    <property type="protein sequence ID" value="CAJ12659.1"/>
    <property type="molecule type" value="Genomic_DNA"/>
</dbReference>
<dbReference type="RefSeq" id="WP_002965898.1">
    <property type="nucleotide sequence ID" value="NZ_KN046823.1"/>
</dbReference>
<dbReference type="SMR" id="Q2YKZ7"/>
<dbReference type="STRING" id="359391.BAB2_0493"/>
<dbReference type="KEGG" id="bmf:BAB2_0493"/>
<dbReference type="PATRIC" id="fig|359391.11.peg.2684"/>
<dbReference type="HOGENOM" id="CLU_000604_1_1_5"/>
<dbReference type="Proteomes" id="UP000002719">
    <property type="component" value="Chromosome II"/>
</dbReference>
<dbReference type="GO" id="GO:0055052">
    <property type="term" value="C:ATP-binding cassette (ABC) transporter complex, substrate-binding subunit-containing"/>
    <property type="evidence" value="ECO:0007669"/>
    <property type="project" value="TreeGrafter"/>
</dbReference>
<dbReference type="GO" id="GO:0140359">
    <property type="term" value="F:ABC-type transporter activity"/>
    <property type="evidence" value="ECO:0007669"/>
    <property type="project" value="InterPro"/>
</dbReference>
<dbReference type="GO" id="GO:0005524">
    <property type="term" value="F:ATP binding"/>
    <property type="evidence" value="ECO:0007669"/>
    <property type="project" value="UniProtKB-KW"/>
</dbReference>
<dbReference type="GO" id="GO:0016887">
    <property type="term" value="F:ATP hydrolysis activity"/>
    <property type="evidence" value="ECO:0007669"/>
    <property type="project" value="InterPro"/>
</dbReference>
<dbReference type="GO" id="GO:0008643">
    <property type="term" value="P:carbohydrate transport"/>
    <property type="evidence" value="ECO:0007669"/>
    <property type="project" value="InterPro"/>
</dbReference>
<dbReference type="CDD" id="cd03301">
    <property type="entry name" value="ABC_MalK_N"/>
    <property type="match status" value="1"/>
</dbReference>
<dbReference type="FunFam" id="3.40.50.300:FF:000042">
    <property type="entry name" value="Maltose/maltodextrin ABC transporter, ATP-binding protein"/>
    <property type="match status" value="1"/>
</dbReference>
<dbReference type="Gene3D" id="2.40.50.100">
    <property type="match status" value="1"/>
</dbReference>
<dbReference type="Gene3D" id="2.40.50.140">
    <property type="entry name" value="Nucleic acid-binding proteins"/>
    <property type="match status" value="1"/>
</dbReference>
<dbReference type="Gene3D" id="3.40.50.300">
    <property type="entry name" value="P-loop containing nucleotide triphosphate hydrolases"/>
    <property type="match status" value="1"/>
</dbReference>
<dbReference type="InterPro" id="IPR003593">
    <property type="entry name" value="AAA+_ATPase"/>
</dbReference>
<dbReference type="InterPro" id="IPR003439">
    <property type="entry name" value="ABC_transporter-like_ATP-bd"/>
</dbReference>
<dbReference type="InterPro" id="IPR017871">
    <property type="entry name" value="ABC_transporter-like_CS"/>
</dbReference>
<dbReference type="InterPro" id="IPR015855">
    <property type="entry name" value="ABC_transpr_MalK-like"/>
</dbReference>
<dbReference type="InterPro" id="IPR047641">
    <property type="entry name" value="ABC_transpr_MalK/UgpC-like"/>
</dbReference>
<dbReference type="InterPro" id="IPR008995">
    <property type="entry name" value="Mo/tungstate-bd_C_term_dom"/>
</dbReference>
<dbReference type="InterPro" id="IPR012340">
    <property type="entry name" value="NA-bd_OB-fold"/>
</dbReference>
<dbReference type="InterPro" id="IPR027417">
    <property type="entry name" value="P-loop_NTPase"/>
</dbReference>
<dbReference type="InterPro" id="IPR013611">
    <property type="entry name" value="Transp-assoc_OB_typ2"/>
</dbReference>
<dbReference type="NCBIfam" id="NF008653">
    <property type="entry name" value="PRK11650.1"/>
    <property type="match status" value="1"/>
</dbReference>
<dbReference type="PANTHER" id="PTHR43875:SF10">
    <property type="entry name" value="BLL2173 PROTEIN"/>
    <property type="match status" value="1"/>
</dbReference>
<dbReference type="PANTHER" id="PTHR43875">
    <property type="entry name" value="MALTODEXTRIN IMPORT ATP-BINDING PROTEIN MSMX"/>
    <property type="match status" value="1"/>
</dbReference>
<dbReference type="Pfam" id="PF00005">
    <property type="entry name" value="ABC_tran"/>
    <property type="match status" value="1"/>
</dbReference>
<dbReference type="Pfam" id="PF08402">
    <property type="entry name" value="TOBE_2"/>
    <property type="match status" value="1"/>
</dbReference>
<dbReference type="SMART" id="SM00382">
    <property type="entry name" value="AAA"/>
    <property type="match status" value="1"/>
</dbReference>
<dbReference type="SUPFAM" id="SSF50331">
    <property type="entry name" value="MOP-like"/>
    <property type="match status" value="1"/>
</dbReference>
<dbReference type="SUPFAM" id="SSF52540">
    <property type="entry name" value="P-loop containing nucleoside triphosphate hydrolases"/>
    <property type="match status" value="1"/>
</dbReference>
<dbReference type="PROSITE" id="PS00211">
    <property type="entry name" value="ABC_TRANSPORTER_1"/>
    <property type="match status" value="1"/>
</dbReference>
<dbReference type="PROSITE" id="PS50893">
    <property type="entry name" value="ABC_TRANSPORTER_2"/>
    <property type="match status" value="1"/>
</dbReference>
<organism>
    <name type="scientific">Brucella abortus (strain 2308)</name>
    <dbReference type="NCBI Taxonomy" id="359391"/>
    <lineage>
        <taxon>Bacteria</taxon>
        <taxon>Pseudomonadati</taxon>
        <taxon>Pseudomonadota</taxon>
        <taxon>Alphaproteobacteria</taxon>
        <taxon>Hyphomicrobiales</taxon>
        <taxon>Brucellaceae</taxon>
        <taxon>Brucella/Ochrobactrum group</taxon>
        <taxon>Brucella</taxon>
    </lineage>
</organism>
<evidence type="ECO:0000255" key="1">
    <source>
        <dbReference type="PROSITE-ProRule" id="PRU00434"/>
    </source>
</evidence>
<evidence type="ECO:0000305" key="2"/>
<name>Y2993_BRUA2</name>
<reference key="1">
    <citation type="journal article" date="2005" name="Infect. Immun.">
        <title>Whole-genome analyses of speciation events in pathogenic Brucellae.</title>
        <authorList>
            <person name="Chain P.S."/>
            <person name="Comerci D.J."/>
            <person name="Tolmasky M.E."/>
            <person name="Larimer F.W."/>
            <person name="Malfatti S.A."/>
            <person name="Vergez L.M."/>
            <person name="Aguero F."/>
            <person name="Land M.L."/>
            <person name="Ugalde R.A."/>
            <person name="Garcia E."/>
        </authorList>
    </citation>
    <scope>NUCLEOTIDE SEQUENCE [LARGE SCALE GENOMIC DNA]</scope>
    <source>
        <strain>2308</strain>
    </source>
</reference>
<keyword id="KW-0067">ATP-binding</keyword>
<keyword id="KW-0997">Cell inner membrane</keyword>
<keyword id="KW-1003">Cell membrane</keyword>
<keyword id="KW-0472">Membrane</keyword>
<keyword id="KW-0547">Nucleotide-binding</keyword>
<keyword id="KW-1185">Reference proteome</keyword>
<keyword id="KW-1278">Translocase</keyword>
<keyword id="KW-0813">Transport</keyword>
<feature type="chain" id="PRO_0000281199" description="Putative ATP-binding protein BAB2_0493">
    <location>
        <begin position="1"/>
        <end position="350"/>
    </location>
</feature>
<feature type="domain" description="ABC transporter" evidence="1">
    <location>
        <begin position="4"/>
        <end position="234"/>
    </location>
</feature>
<feature type="binding site" evidence="1">
    <location>
        <begin position="36"/>
        <end position="43"/>
    </location>
    <ligand>
        <name>ATP</name>
        <dbReference type="ChEBI" id="CHEBI:30616"/>
    </ligand>
</feature>
<comment type="function">
    <text evidence="2">Probably part of an ABC transporter complex. Probably responsible for energy coupling to the transport system (Probable).</text>
</comment>
<comment type="subunit">
    <text evidence="2">The complex is composed of two ATP-binding proteins (BAB2_0493), two transmembrane proteins (BAB2_0490) and a solute-binding protein (BAB2_0491).</text>
</comment>
<comment type="subcellular location">
    <subcellularLocation>
        <location evidence="2">Cell inner membrane</location>
        <topology evidence="2">Peripheral membrane protein</topology>
    </subcellularLocation>
</comment>
<comment type="similarity">
    <text evidence="2">Belongs to the ABC transporter superfamily.</text>
</comment>
<gene>
    <name type="ordered locus">BAB2_0493</name>
</gene>
<sequence>MKEVSLRGISKTFGQLTVLDRIDLEIHSGEFLVLVGPSGCGKSTLLRMVAGLEPISGGDLVIGGERANELPPQKRNIAMVFQSYALFPHMTARENIGFGPRIRGEKAAETAAKVDHAASILNLHSYLDRYPRQLSGGQRQRVAMGRAIVREPSVFLFDEPLSNLDAQLRVQMRTEIKALHQRLKSTVIYVTHDQIEAMTMADRIVVMNQGKIQQIGAPLDLYDRPANKFVAGFIGSPSMSFIPGTVADGFFCTGEGEKIAVSAAAKGARAAEAGIRPENFVIAREGAGLTLVVEVIEPTGPETHIYGRIAGEPVRAVFRERIQLAPGEQVPVTAGSEHIHLFDKESGLPL</sequence>
<proteinExistence type="inferred from homology"/>